<keyword id="KW-0067">ATP-binding</keyword>
<keyword id="KW-0131">Cell cycle</keyword>
<keyword id="KW-0132">Cell division</keyword>
<keyword id="KW-0133">Cell shape</keyword>
<keyword id="KW-0961">Cell wall biogenesis/degradation</keyword>
<keyword id="KW-0963">Cytoplasm</keyword>
<keyword id="KW-0436">Ligase</keyword>
<keyword id="KW-0547">Nucleotide-binding</keyword>
<keyword id="KW-0573">Peptidoglycan synthesis</keyword>
<dbReference type="EC" id="6.3.2.7" evidence="1"/>
<dbReference type="EMBL" id="AP009324">
    <property type="protein sequence ID" value="BAF77895.1"/>
    <property type="molecule type" value="Genomic_DNA"/>
</dbReference>
<dbReference type="RefSeq" id="WP_000340119.1">
    <property type="nucleotide sequence ID" value="NC_009782.1"/>
</dbReference>
<dbReference type="SMR" id="A7X0P6"/>
<dbReference type="KEGG" id="saw:SAHV_1012"/>
<dbReference type="HOGENOM" id="CLU_022291_0_1_9"/>
<dbReference type="UniPathway" id="UPA00219"/>
<dbReference type="GO" id="GO:0005737">
    <property type="term" value="C:cytoplasm"/>
    <property type="evidence" value="ECO:0007669"/>
    <property type="project" value="UniProtKB-SubCell"/>
</dbReference>
<dbReference type="GO" id="GO:0005524">
    <property type="term" value="F:ATP binding"/>
    <property type="evidence" value="ECO:0007669"/>
    <property type="project" value="UniProtKB-UniRule"/>
</dbReference>
<dbReference type="GO" id="GO:0000287">
    <property type="term" value="F:magnesium ion binding"/>
    <property type="evidence" value="ECO:0007669"/>
    <property type="project" value="UniProtKB-UniRule"/>
</dbReference>
<dbReference type="GO" id="GO:0047482">
    <property type="term" value="F:UDP-N-acetylmuramoyl-L-alanyl-D-glutamate-L-lysine ligase activity"/>
    <property type="evidence" value="ECO:0007669"/>
    <property type="project" value="UniProtKB-UniRule"/>
</dbReference>
<dbReference type="GO" id="GO:0051301">
    <property type="term" value="P:cell division"/>
    <property type="evidence" value="ECO:0007669"/>
    <property type="project" value="UniProtKB-KW"/>
</dbReference>
<dbReference type="GO" id="GO:0071555">
    <property type="term" value="P:cell wall organization"/>
    <property type="evidence" value="ECO:0007669"/>
    <property type="project" value="UniProtKB-KW"/>
</dbReference>
<dbReference type="GO" id="GO:0009252">
    <property type="term" value="P:peptidoglycan biosynthetic process"/>
    <property type="evidence" value="ECO:0007669"/>
    <property type="project" value="UniProtKB-UniRule"/>
</dbReference>
<dbReference type="GO" id="GO:0008360">
    <property type="term" value="P:regulation of cell shape"/>
    <property type="evidence" value="ECO:0007669"/>
    <property type="project" value="UniProtKB-KW"/>
</dbReference>
<dbReference type="Gene3D" id="3.90.190.20">
    <property type="entry name" value="Mur ligase, C-terminal domain"/>
    <property type="match status" value="1"/>
</dbReference>
<dbReference type="Gene3D" id="3.40.1190.10">
    <property type="entry name" value="Mur-like, catalytic domain"/>
    <property type="match status" value="1"/>
</dbReference>
<dbReference type="Gene3D" id="3.40.1390.10">
    <property type="entry name" value="MurE/MurF, N-terminal domain"/>
    <property type="match status" value="1"/>
</dbReference>
<dbReference type="HAMAP" id="MF_00208">
    <property type="entry name" value="MurE"/>
    <property type="match status" value="1"/>
</dbReference>
<dbReference type="InterPro" id="IPR036565">
    <property type="entry name" value="Mur-like_cat_sf"/>
</dbReference>
<dbReference type="InterPro" id="IPR004101">
    <property type="entry name" value="Mur_ligase_C"/>
</dbReference>
<dbReference type="InterPro" id="IPR036615">
    <property type="entry name" value="Mur_ligase_C_dom_sf"/>
</dbReference>
<dbReference type="InterPro" id="IPR013221">
    <property type="entry name" value="Mur_ligase_cen"/>
</dbReference>
<dbReference type="InterPro" id="IPR035911">
    <property type="entry name" value="MurE/MurF_N"/>
</dbReference>
<dbReference type="InterPro" id="IPR005761">
    <property type="entry name" value="UDP-N-AcMur-Glu-dNH2Pim_ligase"/>
</dbReference>
<dbReference type="NCBIfam" id="TIGR01085">
    <property type="entry name" value="murE"/>
    <property type="match status" value="1"/>
</dbReference>
<dbReference type="NCBIfam" id="NF001126">
    <property type="entry name" value="PRK00139.1-4"/>
    <property type="match status" value="1"/>
</dbReference>
<dbReference type="NCBIfam" id="NF010628">
    <property type="entry name" value="PRK14022.1"/>
    <property type="match status" value="1"/>
</dbReference>
<dbReference type="PANTHER" id="PTHR23135">
    <property type="entry name" value="MUR LIGASE FAMILY MEMBER"/>
    <property type="match status" value="1"/>
</dbReference>
<dbReference type="PANTHER" id="PTHR23135:SF4">
    <property type="entry name" value="UDP-N-ACETYLMURAMOYL-L-ALANYL-D-GLUTAMATE--2,6-DIAMINOPIMELATE LIGASE MURE HOMOLOG, CHLOROPLASTIC"/>
    <property type="match status" value="1"/>
</dbReference>
<dbReference type="Pfam" id="PF02875">
    <property type="entry name" value="Mur_ligase_C"/>
    <property type="match status" value="1"/>
</dbReference>
<dbReference type="Pfam" id="PF08245">
    <property type="entry name" value="Mur_ligase_M"/>
    <property type="match status" value="1"/>
</dbReference>
<dbReference type="SUPFAM" id="SSF53623">
    <property type="entry name" value="MurD-like peptide ligases, catalytic domain"/>
    <property type="match status" value="1"/>
</dbReference>
<dbReference type="SUPFAM" id="SSF53244">
    <property type="entry name" value="MurD-like peptide ligases, peptide-binding domain"/>
    <property type="match status" value="1"/>
</dbReference>
<dbReference type="SUPFAM" id="SSF63418">
    <property type="entry name" value="MurE/MurF N-terminal domain"/>
    <property type="match status" value="1"/>
</dbReference>
<evidence type="ECO:0000255" key="1">
    <source>
        <dbReference type="HAMAP-Rule" id="MF_00208"/>
    </source>
</evidence>
<gene>
    <name evidence="1" type="primary">murE</name>
    <name type="ordered locus">SAHV_1012</name>
</gene>
<reference key="1">
    <citation type="journal article" date="2008" name="Antimicrob. Agents Chemother.">
        <title>Mutated response regulator graR is responsible for phenotypic conversion of Staphylococcus aureus from heterogeneous vancomycin-intermediate resistance to vancomycin-intermediate resistance.</title>
        <authorList>
            <person name="Neoh H.-M."/>
            <person name="Cui L."/>
            <person name="Yuzawa H."/>
            <person name="Takeuchi F."/>
            <person name="Matsuo M."/>
            <person name="Hiramatsu K."/>
        </authorList>
    </citation>
    <scope>NUCLEOTIDE SEQUENCE [LARGE SCALE GENOMIC DNA]</scope>
    <source>
        <strain>Mu3 / ATCC 700698</strain>
    </source>
</reference>
<accession>A7X0P6</accession>
<proteinExistence type="inferred from homology"/>
<sequence length="494" mass="54233">MDASTLFKKVKVKRVLGSLEQQIDDITTDSRTAREGSIFVASVGYTVDSHKFCQNVADQGCKLVVVNKEQSLPANVTQVVVPDTLRVASILAHTLYDYPSHQLVTFGVTGTNGKTSIATMIHLIQRKLQKNSAYLGTNGFQINETKTKGANTTPETVSLTKKIKEAVDAGAESMTLEVSSHGLVLGRLRGVEFDVAIFSNLTQDHLDFHGTMEAYGHAKSLLFSQLGEDLSKEKYVVLNNDDSFSEYLRTVTPYEVFSYGIDEEAQFMAKNIQESLQGVSFDFVTPFGTYPVKSPYVGKFNISNIMAAMIAVWSKGTSLETIIKAVENLEPVEGRLEVLDPSLPIDLIIDYAHTADGMNKLIDAVQPFVKQKLIFLVGMAGERDLTKTPEMGRVACRADYVIFTPDNPANDDPKMLTAELAKGATHQNYIEFDDRAEGIKHAIDIAEPGDTVVLASKGREPYQIMPGHIKVPHRDDLIGLEAAYKKFGGGPVDQ</sequence>
<comment type="function">
    <text evidence="1">Catalyzes the addition of L-lysine to the nucleotide precursor UDP-N-acetylmuramoyl-L-alanyl-D-glutamate (UMAG) in the biosynthesis of bacterial cell-wall peptidoglycan.</text>
</comment>
<comment type="catalytic activity">
    <reaction evidence="1">
        <text>UDP-N-acetyl-alpha-D-muramoyl-L-alanyl-D-glutamate + L-lysine + ATP = UDP-N-acetyl-alpha-D-muramoyl-L-alanyl-gamma-D-glutamyl-L-lysine + ADP + phosphate + H(+)</text>
        <dbReference type="Rhea" id="RHEA:17969"/>
        <dbReference type="ChEBI" id="CHEBI:15378"/>
        <dbReference type="ChEBI" id="CHEBI:30616"/>
        <dbReference type="ChEBI" id="CHEBI:32551"/>
        <dbReference type="ChEBI" id="CHEBI:43474"/>
        <dbReference type="ChEBI" id="CHEBI:83900"/>
        <dbReference type="ChEBI" id="CHEBI:83903"/>
        <dbReference type="ChEBI" id="CHEBI:456216"/>
        <dbReference type="EC" id="6.3.2.7"/>
    </reaction>
</comment>
<comment type="pathway">
    <text evidence="1">Cell wall biogenesis; peptidoglycan biosynthesis.</text>
</comment>
<comment type="subcellular location">
    <subcellularLocation>
        <location evidence="1">Cytoplasm</location>
    </subcellularLocation>
</comment>
<comment type="PTM">
    <text evidence="1">Carboxylation is probably crucial for Mg(2+) binding and, consequently, for the gamma-phosphate positioning of ATP.</text>
</comment>
<comment type="similarity">
    <text evidence="1">Belongs to the MurCDEF family. MurE subfamily.</text>
</comment>
<organism>
    <name type="scientific">Staphylococcus aureus (strain Mu3 / ATCC 700698)</name>
    <dbReference type="NCBI Taxonomy" id="418127"/>
    <lineage>
        <taxon>Bacteria</taxon>
        <taxon>Bacillati</taxon>
        <taxon>Bacillota</taxon>
        <taxon>Bacilli</taxon>
        <taxon>Bacillales</taxon>
        <taxon>Staphylococcaceae</taxon>
        <taxon>Staphylococcus</taxon>
    </lineage>
</organism>
<feature type="chain" id="PRO_1000012380" description="UDP-N-acetylmuramoyl-L-alanyl-D-glutamate--L-lysine ligase">
    <location>
        <begin position="1"/>
        <end position="494"/>
    </location>
</feature>
<feature type="short sequence motif" description="L-lysine recognition motif">
    <location>
        <begin position="406"/>
        <end position="409"/>
    </location>
</feature>
<feature type="binding site" evidence="1">
    <location>
        <position position="30"/>
    </location>
    <ligand>
        <name>UDP-N-acetyl-alpha-D-muramoyl-L-alanyl-D-glutamate</name>
        <dbReference type="ChEBI" id="CHEBI:83900"/>
    </ligand>
</feature>
<feature type="binding site" evidence="1">
    <location>
        <begin position="110"/>
        <end position="116"/>
    </location>
    <ligand>
        <name>ATP</name>
        <dbReference type="ChEBI" id="CHEBI:30616"/>
    </ligand>
</feature>
<feature type="binding site" evidence="1">
    <location>
        <begin position="152"/>
        <end position="153"/>
    </location>
    <ligand>
        <name>UDP-N-acetyl-alpha-D-muramoyl-L-alanyl-D-glutamate</name>
        <dbReference type="ChEBI" id="CHEBI:83900"/>
    </ligand>
</feature>
<feature type="binding site" evidence="1">
    <location>
        <position position="179"/>
    </location>
    <ligand>
        <name>UDP-N-acetyl-alpha-D-muramoyl-L-alanyl-D-glutamate</name>
        <dbReference type="ChEBI" id="CHEBI:83900"/>
    </ligand>
</feature>
<feature type="binding site" evidence="1">
    <location>
        <position position="187"/>
    </location>
    <ligand>
        <name>UDP-N-acetyl-alpha-D-muramoyl-L-alanyl-D-glutamate</name>
        <dbReference type="ChEBI" id="CHEBI:83900"/>
    </ligand>
</feature>
<feature type="modified residue" description="N6-carboxylysine" evidence="1">
    <location>
        <position position="219"/>
    </location>
</feature>
<protein>
    <recommendedName>
        <fullName evidence="1">UDP-N-acetylmuramoyl-L-alanyl-D-glutamate--L-lysine ligase</fullName>
        <ecNumber evidence="1">6.3.2.7</ecNumber>
    </recommendedName>
    <alternativeName>
        <fullName evidence="1">L-lysine-adding enzyme</fullName>
    </alternativeName>
    <alternativeName>
        <fullName evidence="1">UDP-MurNAc-L-Ala-D-Glu:L-Lys ligase</fullName>
    </alternativeName>
    <alternativeName>
        <fullName evidence="1">UDP-MurNAc-tripeptide synthetase</fullName>
    </alternativeName>
    <alternativeName>
        <fullName evidence="1">UDP-N-acetylmuramyl-tripeptide synthetase</fullName>
    </alternativeName>
</protein>
<name>MURE_STAA1</name>